<feature type="chain" id="PRO_1000147725" description="DNA ligase B">
    <location>
        <begin position="1"/>
        <end position="560"/>
    </location>
</feature>
<feature type="active site" description="N6-AMP-lysine intermediate" evidence="1">
    <location>
        <position position="124"/>
    </location>
</feature>
<accession>B1LK84</accession>
<reference key="1">
    <citation type="journal article" date="2008" name="J. Bacteriol.">
        <title>Insights into the environmental resistance gene pool from the genome sequence of the multidrug-resistant environmental isolate Escherichia coli SMS-3-5.</title>
        <authorList>
            <person name="Fricke W.F."/>
            <person name="Wright M.S."/>
            <person name="Lindell A.H."/>
            <person name="Harkins D.M."/>
            <person name="Baker-Austin C."/>
            <person name="Ravel J."/>
            <person name="Stepanauskas R."/>
        </authorList>
    </citation>
    <scope>NUCLEOTIDE SEQUENCE [LARGE SCALE GENOMIC DNA]</scope>
    <source>
        <strain>SMS-3-5 / SECEC</strain>
    </source>
</reference>
<dbReference type="EC" id="6.5.1.2" evidence="1"/>
<dbReference type="EMBL" id="CP000970">
    <property type="protein sequence ID" value="ACB17022.1"/>
    <property type="molecule type" value="Genomic_DNA"/>
</dbReference>
<dbReference type="RefSeq" id="WP_001361558.1">
    <property type="nucleotide sequence ID" value="NC_010498.1"/>
</dbReference>
<dbReference type="SMR" id="B1LK84"/>
<dbReference type="KEGG" id="ecm:EcSMS35_3981"/>
<dbReference type="HOGENOM" id="CLU_489786_0_0_6"/>
<dbReference type="Proteomes" id="UP000007011">
    <property type="component" value="Chromosome"/>
</dbReference>
<dbReference type="GO" id="GO:0003911">
    <property type="term" value="F:DNA ligase (NAD+) activity"/>
    <property type="evidence" value="ECO:0007669"/>
    <property type="project" value="UniProtKB-UniRule"/>
</dbReference>
<dbReference type="GO" id="GO:0006281">
    <property type="term" value="P:DNA repair"/>
    <property type="evidence" value="ECO:0007669"/>
    <property type="project" value="UniProtKB-KW"/>
</dbReference>
<dbReference type="GO" id="GO:0006260">
    <property type="term" value="P:DNA replication"/>
    <property type="evidence" value="ECO:0007669"/>
    <property type="project" value="UniProtKB-KW"/>
</dbReference>
<dbReference type="FunFam" id="1.10.287.610:FF:000003">
    <property type="entry name" value="DNA ligase B"/>
    <property type="match status" value="1"/>
</dbReference>
<dbReference type="FunFam" id="2.40.50.140:FF:000139">
    <property type="entry name" value="DNA ligase B"/>
    <property type="match status" value="1"/>
</dbReference>
<dbReference type="FunFam" id="3.30.470.30:FF:000007">
    <property type="entry name" value="DNA ligase B"/>
    <property type="match status" value="1"/>
</dbReference>
<dbReference type="Gene3D" id="3.30.470.30">
    <property type="entry name" value="DNA ligase/mRNA capping enzyme"/>
    <property type="match status" value="1"/>
</dbReference>
<dbReference type="Gene3D" id="1.10.287.610">
    <property type="entry name" value="Helix hairpin bin"/>
    <property type="match status" value="1"/>
</dbReference>
<dbReference type="Gene3D" id="2.40.50.140">
    <property type="entry name" value="Nucleic acid-binding proteins"/>
    <property type="match status" value="1"/>
</dbReference>
<dbReference type="HAMAP" id="MF_01587">
    <property type="entry name" value="DNA_ligase_B"/>
    <property type="match status" value="1"/>
</dbReference>
<dbReference type="InterPro" id="IPR018239">
    <property type="entry name" value="DNA_ligase_AS"/>
</dbReference>
<dbReference type="InterPro" id="IPR020923">
    <property type="entry name" value="DNA_ligase_B"/>
</dbReference>
<dbReference type="InterPro" id="IPR033136">
    <property type="entry name" value="DNA_ligase_CS"/>
</dbReference>
<dbReference type="InterPro" id="IPR013839">
    <property type="entry name" value="DNAligase_adenylation"/>
</dbReference>
<dbReference type="InterPro" id="IPR013840">
    <property type="entry name" value="DNAligase_N"/>
</dbReference>
<dbReference type="InterPro" id="IPR012340">
    <property type="entry name" value="NA-bd_OB-fold"/>
</dbReference>
<dbReference type="InterPro" id="IPR050326">
    <property type="entry name" value="NAD_dep_DNA_ligaseB"/>
</dbReference>
<dbReference type="InterPro" id="IPR004150">
    <property type="entry name" value="NAD_DNA_ligase_OB"/>
</dbReference>
<dbReference type="InterPro" id="IPR010994">
    <property type="entry name" value="RuvA_2-like"/>
</dbReference>
<dbReference type="NCBIfam" id="NF005987">
    <property type="entry name" value="PRK08097.1"/>
    <property type="match status" value="1"/>
</dbReference>
<dbReference type="PANTHER" id="PTHR47810">
    <property type="entry name" value="DNA LIGASE"/>
    <property type="match status" value="1"/>
</dbReference>
<dbReference type="PANTHER" id="PTHR47810:SF1">
    <property type="entry name" value="DNA LIGASE B"/>
    <property type="match status" value="1"/>
</dbReference>
<dbReference type="Pfam" id="PF01653">
    <property type="entry name" value="DNA_ligase_aden"/>
    <property type="match status" value="1"/>
</dbReference>
<dbReference type="Pfam" id="PF03120">
    <property type="entry name" value="DNA_ligase_OB"/>
    <property type="match status" value="1"/>
</dbReference>
<dbReference type="SMART" id="SM00532">
    <property type="entry name" value="LIGANc"/>
    <property type="match status" value="1"/>
</dbReference>
<dbReference type="SUPFAM" id="SSF56091">
    <property type="entry name" value="DNA ligase/mRNA capping enzyme, catalytic domain"/>
    <property type="match status" value="1"/>
</dbReference>
<dbReference type="SUPFAM" id="SSF50249">
    <property type="entry name" value="Nucleic acid-binding proteins"/>
    <property type="match status" value="1"/>
</dbReference>
<dbReference type="SUPFAM" id="SSF47781">
    <property type="entry name" value="RuvA domain 2-like"/>
    <property type="match status" value="1"/>
</dbReference>
<dbReference type="PROSITE" id="PS01055">
    <property type="entry name" value="DNA_LIGASE_N1"/>
    <property type="match status" value="1"/>
</dbReference>
<dbReference type="PROSITE" id="PS01056">
    <property type="entry name" value="DNA_LIGASE_N2"/>
    <property type="match status" value="1"/>
</dbReference>
<protein>
    <recommendedName>
        <fullName evidence="1">DNA ligase B</fullName>
        <ecNumber evidence="1">6.5.1.2</ecNumber>
    </recommendedName>
    <alternativeName>
        <fullName evidence="1">Polydeoxyribonucleotide synthase [NAD(+)] B</fullName>
    </alternativeName>
</protein>
<proteinExistence type="inferred from homology"/>
<sequence length="560" mass="63189">MKVWMAILISILCWQSSAWAVCPAWSPARAQEEISRLQQQIKQWDDDYWKEGKSEVEDGVYDQLSARLTQWQRCFGNETRDAMMPPLNGAVMHPVAHTGVRKMADKNALSLWMRERSDLWVQPKVDGVAVTLVYRDGKLNKAISRGNGLKGEDWTQKVRLISAVPQTVSGPLANSTLQGEIFLKRKGHIQQQMGGINARAKVAGLMMRQGNSDTLNSLAVFVWAWPDGPQLMTDRLKELATAGFTLTQTYTRAVKNADEVAHVRNEWWKAKLPFVTDGVVVRAAKEPESRHWLPGQAEWLVAWKYQPVAQVAEVKAIQFAVGKSGKISVVASLAPVMLDDKKVQRVNIGSVRRWQEWDIAPGDQILVSLAGQGIPRIDDVVWRGAERTKPTPPENRFNSLTCYFASDVCQEQFISRLVWLGSKQVLGLDGIGEAGWRALHQTHRFEHIFSWLLLTPEQLQNTPGIAKSKSAQLWHQFNLARQQPFTRWVMAMGIPLTRAALNASDERSWSQLLFSTEQFWQQLPGTGSGRARQVIEWKENAQIKKLGSWLAAQQITGFEP</sequence>
<gene>
    <name evidence="1" type="primary">ligB</name>
    <name type="ordered locus">EcSMS35_3981</name>
</gene>
<comment type="function">
    <text evidence="1">Catalyzes the formation of phosphodiester linkages between 5'-phosphoryl and 3'-hydroxyl groups in double-stranded DNA using NAD as a coenzyme and as the energy source for the reaction.</text>
</comment>
<comment type="catalytic activity">
    <reaction evidence="1">
        <text>NAD(+) + (deoxyribonucleotide)n-3'-hydroxyl + 5'-phospho-(deoxyribonucleotide)m = (deoxyribonucleotide)n+m + AMP + beta-nicotinamide D-nucleotide.</text>
        <dbReference type="EC" id="6.5.1.2"/>
    </reaction>
</comment>
<comment type="similarity">
    <text evidence="1">Belongs to the NAD-dependent DNA ligase family. LigB subfamily.</text>
</comment>
<evidence type="ECO:0000255" key="1">
    <source>
        <dbReference type="HAMAP-Rule" id="MF_01587"/>
    </source>
</evidence>
<keyword id="KW-0227">DNA damage</keyword>
<keyword id="KW-0234">DNA repair</keyword>
<keyword id="KW-0235">DNA replication</keyword>
<keyword id="KW-0436">Ligase</keyword>
<keyword id="KW-0520">NAD</keyword>
<name>LIGB_ECOSM</name>
<organism>
    <name type="scientific">Escherichia coli (strain SMS-3-5 / SECEC)</name>
    <dbReference type="NCBI Taxonomy" id="439855"/>
    <lineage>
        <taxon>Bacteria</taxon>
        <taxon>Pseudomonadati</taxon>
        <taxon>Pseudomonadota</taxon>
        <taxon>Gammaproteobacteria</taxon>
        <taxon>Enterobacterales</taxon>
        <taxon>Enterobacteriaceae</taxon>
        <taxon>Escherichia</taxon>
    </lineage>
</organism>